<dbReference type="EC" id="2.1.1.-"/>
<dbReference type="EMBL" id="AE000516">
    <property type="protein sequence ID" value="AAK44899.1"/>
    <property type="status" value="ALT_INIT"/>
    <property type="molecule type" value="Genomic_DNA"/>
</dbReference>
<dbReference type="PIR" id="B70614">
    <property type="entry name" value="B70614"/>
</dbReference>
<dbReference type="RefSeq" id="WP_003403310.1">
    <property type="nucleotide sequence ID" value="NZ_KK341227.1"/>
</dbReference>
<dbReference type="SMR" id="P9WPB0"/>
<dbReference type="GeneID" id="45424605"/>
<dbReference type="KEGG" id="mtc:MT0673"/>
<dbReference type="PATRIC" id="fig|83331.31.peg.716"/>
<dbReference type="HOGENOM" id="CLU_026434_3_0_11"/>
<dbReference type="UniPathway" id="UPA00915"/>
<dbReference type="Proteomes" id="UP000001020">
    <property type="component" value="Chromosome"/>
</dbReference>
<dbReference type="GO" id="GO:0008168">
    <property type="term" value="F:methyltransferase activity"/>
    <property type="evidence" value="ECO:0007669"/>
    <property type="project" value="UniProtKB-KW"/>
</dbReference>
<dbReference type="GO" id="GO:0008610">
    <property type="term" value="P:lipid biosynthetic process"/>
    <property type="evidence" value="ECO:0007669"/>
    <property type="project" value="InterPro"/>
</dbReference>
<dbReference type="GO" id="GO:0032259">
    <property type="term" value="P:methylation"/>
    <property type="evidence" value="ECO:0007669"/>
    <property type="project" value="UniProtKB-KW"/>
</dbReference>
<dbReference type="CDD" id="cd02440">
    <property type="entry name" value="AdoMet_MTases"/>
    <property type="match status" value="1"/>
</dbReference>
<dbReference type="FunFam" id="3.40.50.150:FF:000115">
    <property type="entry name" value="Cyclopropane mycolic acid synthase 1"/>
    <property type="match status" value="1"/>
</dbReference>
<dbReference type="Gene3D" id="3.40.50.150">
    <property type="entry name" value="Vaccinia Virus protein VP39"/>
    <property type="match status" value="1"/>
</dbReference>
<dbReference type="InterPro" id="IPR050723">
    <property type="entry name" value="CFA/CMAS"/>
</dbReference>
<dbReference type="InterPro" id="IPR003333">
    <property type="entry name" value="CMAS"/>
</dbReference>
<dbReference type="InterPro" id="IPR047672">
    <property type="entry name" value="CMAS_actinobact"/>
</dbReference>
<dbReference type="InterPro" id="IPR029063">
    <property type="entry name" value="SAM-dependent_MTases_sf"/>
</dbReference>
<dbReference type="NCBIfam" id="NF040660">
    <property type="entry name" value="mycolic_MTase"/>
    <property type="match status" value="1"/>
</dbReference>
<dbReference type="PANTHER" id="PTHR43667">
    <property type="entry name" value="CYCLOPROPANE-FATTY-ACYL-PHOSPHOLIPID SYNTHASE"/>
    <property type="match status" value="1"/>
</dbReference>
<dbReference type="PANTHER" id="PTHR43667:SF1">
    <property type="entry name" value="CYCLOPROPANE-FATTY-ACYL-PHOSPHOLIPID SYNTHASE"/>
    <property type="match status" value="1"/>
</dbReference>
<dbReference type="Pfam" id="PF02353">
    <property type="entry name" value="CMAS"/>
    <property type="match status" value="1"/>
</dbReference>
<dbReference type="PIRSF" id="PIRSF003085">
    <property type="entry name" value="CMAS"/>
    <property type="match status" value="1"/>
</dbReference>
<dbReference type="SUPFAM" id="SSF53335">
    <property type="entry name" value="S-adenosyl-L-methionine-dependent methyltransferases"/>
    <property type="match status" value="1"/>
</dbReference>
<evidence type="ECO:0000250" key="1"/>
<evidence type="ECO:0000305" key="2"/>
<reference key="1">
    <citation type="journal article" date="2002" name="J. Bacteriol.">
        <title>Whole-genome comparison of Mycobacterium tuberculosis clinical and laboratory strains.</title>
        <authorList>
            <person name="Fleischmann R.D."/>
            <person name="Alland D."/>
            <person name="Eisen J.A."/>
            <person name="Carpenter L."/>
            <person name="White O."/>
            <person name="Peterson J.D."/>
            <person name="DeBoy R.T."/>
            <person name="Dodson R.J."/>
            <person name="Gwinn M.L."/>
            <person name="Haft D.H."/>
            <person name="Hickey E.K."/>
            <person name="Kolonay J.F."/>
            <person name="Nelson W.C."/>
            <person name="Umayam L.A."/>
            <person name="Ermolaeva M.D."/>
            <person name="Salzberg S.L."/>
            <person name="Delcher A."/>
            <person name="Utterback T.R."/>
            <person name="Weidman J.F."/>
            <person name="Khouri H.M."/>
            <person name="Gill J."/>
            <person name="Mikula A."/>
            <person name="Bishai W."/>
            <person name="Jacobs W.R. Jr."/>
            <person name="Venter J.C."/>
            <person name="Fraser C.M."/>
        </authorList>
    </citation>
    <scope>NUCLEOTIDE SEQUENCE [LARGE SCALE GENOMIC DNA]</scope>
    <source>
        <strain>CDC 1551 / Oshkosh</strain>
    </source>
</reference>
<keyword id="KW-0444">Lipid biosynthesis</keyword>
<keyword id="KW-0443">Lipid metabolism</keyword>
<keyword id="KW-0489">Methyltransferase</keyword>
<keyword id="KW-1185">Reference proteome</keyword>
<keyword id="KW-0949">S-adenosyl-L-methionine</keyword>
<keyword id="KW-0808">Transferase</keyword>
<proteinExistence type="inferred from homology"/>
<gene>
    <name type="primary">mmaA1</name>
    <name type="synonym">mma1</name>
    <name type="ordered locus">MT0673</name>
</gene>
<organism>
    <name type="scientific">Mycobacterium tuberculosis (strain CDC 1551 / Oshkosh)</name>
    <dbReference type="NCBI Taxonomy" id="83331"/>
    <lineage>
        <taxon>Bacteria</taxon>
        <taxon>Bacillati</taxon>
        <taxon>Actinomycetota</taxon>
        <taxon>Actinomycetes</taxon>
        <taxon>Mycobacteriales</taxon>
        <taxon>Mycobacteriaceae</taxon>
        <taxon>Mycobacterium</taxon>
        <taxon>Mycobacterium tuberculosis complex</taxon>
    </lineage>
</organism>
<comment type="function">
    <text evidence="1">Involved in the conversion of a cis-olefin into a trans-olefin with concomitant introduction of an allylic methyl branch at the proximal position of the precursor to both the methoxy and ketomycolic acids. It directly affects the cis- to trans ratio and indirectly affects the keto to methoxy ratio (By similarity).</text>
</comment>
<comment type="pathway">
    <text>Lipid metabolism; mycolic acid biosynthesis.</text>
</comment>
<comment type="similarity">
    <text evidence="2">Belongs to the CFA/CMAS family.</text>
</comment>
<comment type="sequence caution" evidence="2">
    <conflict type="erroneous initiation">
        <sequence resource="EMBL-CDS" id="AAK44899"/>
    </conflict>
    <text>Extended N-terminus.</text>
</comment>
<accession>P9WPB0</accession>
<accession>L0T754</accession>
<accession>P0A5Q0</accession>
<accession>P0C5C3</accession>
<accession>P72025</accession>
<accession>P94922</accession>
<accession>P96934</accession>
<name>MMAA1_MYCTO</name>
<feature type="chain" id="PRO_0000426983" description="Mycolic acid methyltransferase MmaA1">
    <location>
        <begin position="1"/>
        <end position="286"/>
    </location>
</feature>
<feature type="active site" evidence="1">
    <location>
        <position position="268"/>
    </location>
</feature>
<feature type="binding site" evidence="1">
    <location>
        <begin position="32"/>
        <end position="33"/>
    </location>
    <ligand>
        <name>S-adenosyl-L-methionine</name>
        <dbReference type="ChEBI" id="CHEBI:59789"/>
    </ligand>
</feature>
<feature type="binding site" evidence="1">
    <location>
        <begin position="71"/>
        <end position="73"/>
    </location>
    <ligand>
        <name>S-adenosyl-L-methionine</name>
        <dbReference type="ChEBI" id="CHEBI:59789"/>
    </ligand>
</feature>
<feature type="binding site" evidence="1">
    <location>
        <begin position="93"/>
        <end position="98"/>
    </location>
    <ligand>
        <name>S-adenosyl-L-methionine</name>
        <dbReference type="ChEBI" id="CHEBI:59789"/>
    </ligand>
</feature>
<feature type="binding site" evidence="1">
    <location>
        <begin position="122"/>
        <end position="123"/>
    </location>
    <ligand>
        <name>S-adenosyl-L-methionine</name>
        <dbReference type="ChEBI" id="CHEBI:59789"/>
    </ligand>
</feature>
<sequence>MAKLRPYYEESQSAYDISDDFFALFLDPTWVYTCAYFERDDMTLEEAQLAKVDLALDKLNLEPGMTLLDVGCGWGGALVRAVEKYDVNVIGLTLSRNHYERSKDRLAAIGTQRRAEARLQGWEEFEENVDRIVSFEAFDAFKKERYLTFFERSYDILPDDGRMLLHSLFTYDRRWLHEQGIALTMSDLRFLKFLRESIFPGGELPSEPDIVDNAQAAGFTIEHVQLLQQHYARTLDAWAANLQAARERAIAVQSEEVYNNFMHYLTGCAERFRRGLINVAQFTMTK</sequence>
<protein>
    <recommendedName>
        <fullName>Mycolic acid methyltransferase MmaA1</fullName>
        <ecNumber>2.1.1.-</ecNumber>
    </recommendedName>
    <alternativeName>
        <fullName>S-adenosylmethionine-dependent methyltransferase</fullName>
        <shortName>AdoMet-MT</shortName>
        <shortName>SAM-MT</shortName>
    </alternativeName>
</protein>